<dbReference type="EC" id="3.1.11.-" evidence="2"/>
<dbReference type="EMBL" id="GQ258855">
    <property type="protein sequence ID" value="ACT37324.1"/>
    <property type="molecule type" value="mRNA"/>
</dbReference>
<dbReference type="Allergome" id="9071">
    <property type="allergen name" value="Sta c 3"/>
</dbReference>
<dbReference type="Allergome" id="9507">
    <property type="allergen name" value="Sta c 3.0101"/>
</dbReference>
<dbReference type="VEuPathDB" id="FungiDB:S40293_05432"/>
<dbReference type="GO" id="GO:0005576">
    <property type="term" value="C:extracellular region"/>
    <property type="evidence" value="ECO:0000314"/>
    <property type="project" value="UniProtKB"/>
</dbReference>
<dbReference type="GO" id="GO:0004529">
    <property type="term" value="F:DNA exonuclease activity"/>
    <property type="evidence" value="ECO:0000314"/>
    <property type="project" value="UniProtKB"/>
</dbReference>
<dbReference type="GO" id="GO:0042802">
    <property type="term" value="F:identical protein binding"/>
    <property type="evidence" value="ECO:0000314"/>
    <property type="project" value="UniProtKB"/>
</dbReference>
<dbReference type="GO" id="GO:0042803">
    <property type="term" value="F:protein homodimerization activity"/>
    <property type="evidence" value="ECO:0000314"/>
    <property type="project" value="UniProtKB"/>
</dbReference>
<dbReference type="GO" id="GO:0006259">
    <property type="term" value="P:DNA metabolic process"/>
    <property type="evidence" value="ECO:0000314"/>
    <property type="project" value="UniProtKB"/>
</dbReference>
<keyword id="KW-0020">Allergen</keyword>
<keyword id="KW-0903">Direct protein sequencing</keyword>
<keyword id="KW-0269">Exonuclease</keyword>
<keyword id="KW-0325">Glycoprotein</keyword>
<keyword id="KW-0378">Hydrolase</keyword>
<keyword id="KW-0540">Nuclease</keyword>
<keyword id="KW-0964">Secreted</keyword>
<protein>
    <recommendedName>
        <fullName evidence="4">Antigenic protein SchS21</fullName>
    </recommendedName>
    <alternativeName>
        <fullName evidence="4">21 kDa secretory protein</fullName>
    </alternativeName>
    <alternativeName>
        <fullName evidence="4">Alkaline exodeoxyribonuclease</fullName>
        <ecNumber evidence="2">3.1.11.-</ecNumber>
    </alternativeName>
    <alternativeName>
        <fullName evidence="4">SchS21</fullName>
    </alternativeName>
    <allergenName evidence="5">Sta c 3.0101</allergenName>
</protein>
<accession>C7E9W0</accession>
<sequence>ASVTFWTLDNVDRTLVFTGNPGSAAIETITVGPAENTTVEFPGSWVGNWYAYPTDAEDVPGMLGEVQFGGWNGLTYFDVSAIVNPTDHDNVKQMWPAESRKPMSGCEVFPCDNAYWLPDDIQTKVTHEVDLWTTLGAGSTGLTF</sequence>
<reference evidence="6" key="1">
    <citation type="journal article" date="2011" name="Int. Arch. Allergy Immunol.">
        <title>Characterization of human antigenic proteins SchS21 and SchS34 from Stachybotrys chartarum.</title>
        <authorList>
            <person name="Shi C."/>
            <person name="Smith M.L."/>
            <person name="Miller J.D."/>
        </authorList>
    </citation>
    <scope>NUCLEOTIDE SEQUENCE [MRNA]</scope>
    <scope>PROTEIN SEQUENCE OF 1-16; 3-13 AND 75-92</scope>
    <scope>FUNCTION</scope>
    <scope>CATALYTIC ACTIVITY</scope>
    <scope>COFACTOR</scope>
    <scope>BIOPHYSICOCHEMICAL PROPERTIES</scope>
    <scope>SUBUNIT</scope>
    <scope>ALLERGEN</scope>
    <source>
        <strain evidence="4">DAOM 235557</strain>
        <tissue evidence="4">Mycelium</tissue>
    </source>
</reference>
<reference key="2">
    <citation type="journal article" date="2012" name="Mol. Immunol.">
        <title>Sta c 3 epitopes and their application as biomarkers to detect specific IgE.</title>
        <authorList>
            <person name="Shi C."/>
            <person name="Miller J.D."/>
        </authorList>
    </citation>
    <scope>SUBCELLULAR LOCATION</scope>
    <scope>ALLERGEN</scope>
    <scope>REGION</scope>
    <scope>SITES</scope>
    <scope>MUTAGENESIS OF PRO-96; GLU-98; ARG-100 AND LYS-101</scope>
    <scope>3D-STRUCTURE MODELING</scope>
</reference>
<comment type="function">
    <text evidence="2">Has exodeoxyribonuclease activity with lambda-DNA and salmon testes dsDNA. No activity with circular plasmid DNA. The physiological role of this enzyme may be to degrade environmental DNA, and thus mobilize nitrogen for uptake.</text>
</comment>
<comment type="cofactor">
    <cofactor evidence="2">
        <name>Mg(2+)</name>
        <dbReference type="ChEBI" id="CHEBI:18420"/>
    </cofactor>
</comment>
<comment type="biophysicochemical properties">
    <kinetics>
        <KM evidence="2">0.00329 mg/ml for salmon testes dsDNA (at pH 9 and 37 degrees Celsius)</KM>
    </kinetics>
    <phDependence>
        <text evidence="2">Optimum pH is 9. No activity between pH 3-6.</text>
    </phDependence>
    <temperatureDependence>
        <text evidence="2">Optimum temperature is 45 degrees Celsius. Activity is about 80% of the maximum activity at 35 and 50 degrees Celsius.</text>
    </temperatureDependence>
</comment>
<comment type="subunit">
    <text evidence="2">Homodimer.</text>
</comment>
<comment type="subcellular location">
    <subcellularLocation>
        <location evidence="3">Secreted</location>
    </subcellularLocation>
</comment>
<comment type="allergen">
    <text evidence="2 3">Causes an allergic reaction in human. Natural protein binds to IgE of patients allergic to toxic black mold fungus (PubMed:21109751, PubMed:22424314). Recombinant protein binds to IgE of patients allergic to toxic black mold fungus (PubMed:21109751). Binds to IgG (PubMed:22424314).</text>
</comment>
<organism evidence="6">
    <name type="scientific">Stachybotrys chartarum</name>
    <name type="common">Toxic black mold</name>
    <name type="synonym">Stilbospora chartarum</name>
    <dbReference type="NCBI Taxonomy" id="74722"/>
    <lineage>
        <taxon>Eukaryota</taxon>
        <taxon>Fungi</taxon>
        <taxon>Dikarya</taxon>
        <taxon>Ascomycota</taxon>
        <taxon>Pezizomycotina</taxon>
        <taxon>Sordariomycetes</taxon>
        <taxon>Hypocreomycetidae</taxon>
        <taxon>Hypocreales</taxon>
        <taxon>Stachybotryaceae</taxon>
        <taxon>Stachybotrys</taxon>
    </lineage>
</organism>
<evidence type="ECO:0000255" key="1">
    <source>
        <dbReference type="PROSITE-ProRule" id="PRU00498"/>
    </source>
</evidence>
<evidence type="ECO:0000269" key="2">
    <source>
    </source>
</evidence>
<evidence type="ECO:0000269" key="3">
    <source>
    </source>
</evidence>
<evidence type="ECO:0000303" key="4">
    <source>
    </source>
</evidence>
<evidence type="ECO:0000305" key="5"/>
<evidence type="ECO:0000312" key="6">
    <source>
        <dbReference type="EMBL" id="ACT37324.1"/>
    </source>
</evidence>
<feature type="chain" id="PRO_0000455632" description="Antigenic protein SchS21">
    <location>
        <begin position="1" status="less than"/>
        <end position="144"/>
    </location>
</feature>
<feature type="region of interest" description="IgE-binding epitope" evidence="3">
    <location>
        <begin position="91"/>
        <end position="105"/>
    </location>
</feature>
<feature type="site" description="Critical for IgE-binding" evidence="3">
    <location>
        <position position="100"/>
    </location>
</feature>
<feature type="site" description="Critical for IgE-binding" evidence="3">
    <location>
        <position position="101"/>
    </location>
</feature>
<feature type="glycosylation site" description="N-linked (GlcNAc...) asparagine" evidence="1">
    <location>
        <position position="36"/>
    </location>
</feature>
<feature type="mutagenesis site" description="Increased IgE-binding of the 91-V--P-102 and 94-M--G-105 peptides." evidence="3">
    <original>P</original>
    <variation>A</variation>
    <location>
        <position position="96"/>
    </location>
</feature>
<feature type="mutagenesis site" description="Increased IgE-binding of the 91-V--P-102 and 94-M--G-105 peptides." evidence="3">
    <original>E</original>
    <variation>A</variation>
    <location>
        <position position="98"/>
    </location>
</feature>
<feature type="mutagenesis site" description="Significant decrease in IgE-binding of the 91-V--P-102 and 94-M--G-105 peptides." evidence="3">
    <original>R</original>
    <variation>A</variation>
    <location>
        <position position="100"/>
    </location>
</feature>
<feature type="mutagenesis site" description="Significant decrease in IgE-binding of the 91-V--P-102 and 94-M--G-105 peptides." evidence="3">
    <original>K</original>
    <variation>A</variation>
    <location>
        <position position="101"/>
    </location>
</feature>
<feature type="non-terminal residue" evidence="6">
    <location>
        <position position="1"/>
    </location>
</feature>
<name>SCH21_STACH</name>
<proteinExistence type="evidence at protein level"/>